<proteinExistence type="inferred from homology"/>
<sequence length="362" mass="38516">MIDPFKRLARKGLFLFDPETAHGMSIAALKSGLVPACQITPDPRLCQTVAGLTFENPLGMAAGYDKNAEVPEALLKLGFGFTEIGTVTPKPQAGNPRPRIFRLVEDEAVINRLGFNNEGHEAAFGRLAALSGRGIVGVNIGANKDSEDRIADYVAGIRRFHSVARYFTANISSPNTPGLRDLQARESLAALLSSVLAARDEVAAASGRKVPVFLKIAPDLTEEGMDDIAAEALAHALDGLIVSNTTLSRDGLKDQRQAKETGGLSGVPLFEKSTAVLARMRKRVGAALPIIGVGGVSSAETALEKIRAGADLVQLYSCMVYEGPGLPGDIVRGLSKLMDREKAAGIGELRDSRLDYWAARKV</sequence>
<accession>B5ZPH6</accession>
<gene>
    <name evidence="1" type="primary">pyrD</name>
    <name type="ordered locus">Rleg2_0193</name>
</gene>
<name>PYRD_RHILW</name>
<organism>
    <name type="scientific">Rhizobium leguminosarum bv. trifolii (strain WSM2304)</name>
    <dbReference type="NCBI Taxonomy" id="395492"/>
    <lineage>
        <taxon>Bacteria</taxon>
        <taxon>Pseudomonadati</taxon>
        <taxon>Pseudomonadota</taxon>
        <taxon>Alphaproteobacteria</taxon>
        <taxon>Hyphomicrobiales</taxon>
        <taxon>Rhizobiaceae</taxon>
        <taxon>Rhizobium/Agrobacterium group</taxon>
        <taxon>Rhizobium</taxon>
    </lineage>
</organism>
<reference key="1">
    <citation type="journal article" date="2010" name="Stand. Genomic Sci.">
        <title>Complete genome sequence of Rhizobium leguminosarum bv trifolii strain WSM2304, an effective microsymbiont of the South American clover Trifolium polymorphum.</title>
        <authorList>
            <person name="Reeve W."/>
            <person name="O'Hara G."/>
            <person name="Chain P."/>
            <person name="Ardley J."/>
            <person name="Brau L."/>
            <person name="Nandesena K."/>
            <person name="Tiwari R."/>
            <person name="Malfatti S."/>
            <person name="Kiss H."/>
            <person name="Lapidus A."/>
            <person name="Copeland A."/>
            <person name="Nolan M."/>
            <person name="Land M."/>
            <person name="Ivanova N."/>
            <person name="Mavromatis K."/>
            <person name="Markowitz V."/>
            <person name="Kyrpides N."/>
            <person name="Melino V."/>
            <person name="Denton M."/>
            <person name="Yates R."/>
            <person name="Howieson J."/>
        </authorList>
    </citation>
    <scope>NUCLEOTIDE SEQUENCE [LARGE SCALE GENOMIC DNA]</scope>
    <source>
        <strain>WSM2304</strain>
    </source>
</reference>
<keyword id="KW-1003">Cell membrane</keyword>
<keyword id="KW-0285">Flavoprotein</keyword>
<keyword id="KW-0288">FMN</keyword>
<keyword id="KW-0472">Membrane</keyword>
<keyword id="KW-0560">Oxidoreductase</keyword>
<keyword id="KW-0665">Pyrimidine biosynthesis</keyword>
<keyword id="KW-1185">Reference proteome</keyword>
<feature type="chain" id="PRO_1000100278" description="Dihydroorotate dehydrogenase (quinone)">
    <location>
        <begin position="1"/>
        <end position="362"/>
    </location>
</feature>
<feature type="active site" description="Nucleophile" evidence="1">
    <location>
        <position position="173"/>
    </location>
</feature>
<feature type="binding site" evidence="1">
    <location>
        <begin position="62"/>
        <end position="66"/>
    </location>
    <ligand>
        <name>FMN</name>
        <dbReference type="ChEBI" id="CHEBI:58210"/>
    </ligand>
</feature>
<feature type="binding site" evidence="1">
    <location>
        <position position="66"/>
    </location>
    <ligand>
        <name>substrate</name>
    </ligand>
</feature>
<feature type="binding site" evidence="1">
    <location>
        <position position="86"/>
    </location>
    <ligand>
        <name>FMN</name>
        <dbReference type="ChEBI" id="CHEBI:58210"/>
    </ligand>
</feature>
<feature type="binding site" evidence="1">
    <location>
        <begin position="111"/>
        <end position="115"/>
    </location>
    <ligand>
        <name>substrate</name>
    </ligand>
</feature>
<feature type="binding site" evidence="1">
    <location>
        <position position="139"/>
    </location>
    <ligand>
        <name>FMN</name>
        <dbReference type="ChEBI" id="CHEBI:58210"/>
    </ligand>
</feature>
<feature type="binding site" evidence="1">
    <location>
        <position position="170"/>
    </location>
    <ligand>
        <name>FMN</name>
        <dbReference type="ChEBI" id="CHEBI:58210"/>
    </ligand>
</feature>
<feature type="binding site" evidence="1">
    <location>
        <position position="170"/>
    </location>
    <ligand>
        <name>substrate</name>
    </ligand>
</feature>
<feature type="binding site" evidence="1">
    <location>
        <position position="175"/>
    </location>
    <ligand>
        <name>substrate</name>
    </ligand>
</feature>
<feature type="binding site" evidence="1">
    <location>
        <position position="215"/>
    </location>
    <ligand>
        <name>FMN</name>
        <dbReference type="ChEBI" id="CHEBI:58210"/>
    </ligand>
</feature>
<feature type="binding site" evidence="1">
    <location>
        <position position="243"/>
    </location>
    <ligand>
        <name>FMN</name>
        <dbReference type="ChEBI" id="CHEBI:58210"/>
    </ligand>
</feature>
<feature type="binding site" evidence="1">
    <location>
        <begin position="244"/>
        <end position="245"/>
    </location>
    <ligand>
        <name>substrate</name>
    </ligand>
</feature>
<feature type="binding site" evidence="1">
    <location>
        <position position="266"/>
    </location>
    <ligand>
        <name>FMN</name>
        <dbReference type="ChEBI" id="CHEBI:58210"/>
    </ligand>
</feature>
<feature type="binding site" evidence="1">
    <location>
        <position position="295"/>
    </location>
    <ligand>
        <name>FMN</name>
        <dbReference type="ChEBI" id="CHEBI:58210"/>
    </ligand>
</feature>
<feature type="binding site" evidence="1">
    <location>
        <begin position="316"/>
        <end position="317"/>
    </location>
    <ligand>
        <name>FMN</name>
        <dbReference type="ChEBI" id="CHEBI:58210"/>
    </ligand>
</feature>
<comment type="function">
    <text evidence="1">Catalyzes the conversion of dihydroorotate to orotate with quinone as electron acceptor.</text>
</comment>
<comment type="catalytic activity">
    <reaction evidence="1">
        <text>(S)-dihydroorotate + a quinone = orotate + a quinol</text>
        <dbReference type="Rhea" id="RHEA:30187"/>
        <dbReference type="ChEBI" id="CHEBI:24646"/>
        <dbReference type="ChEBI" id="CHEBI:30839"/>
        <dbReference type="ChEBI" id="CHEBI:30864"/>
        <dbReference type="ChEBI" id="CHEBI:132124"/>
        <dbReference type="EC" id="1.3.5.2"/>
    </reaction>
</comment>
<comment type="cofactor">
    <cofactor evidence="1">
        <name>FMN</name>
        <dbReference type="ChEBI" id="CHEBI:58210"/>
    </cofactor>
    <text evidence="1">Binds 1 FMN per subunit.</text>
</comment>
<comment type="pathway">
    <text evidence="1">Pyrimidine metabolism; UMP biosynthesis via de novo pathway; orotate from (S)-dihydroorotate (quinone route): step 1/1.</text>
</comment>
<comment type="subunit">
    <text evidence="1">Monomer.</text>
</comment>
<comment type="subcellular location">
    <subcellularLocation>
        <location evidence="1">Cell membrane</location>
        <topology evidence="1">Peripheral membrane protein</topology>
    </subcellularLocation>
</comment>
<comment type="similarity">
    <text evidence="1">Belongs to the dihydroorotate dehydrogenase family. Type 2 subfamily.</text>
</comment>
<evidence type="ECO:0000255" key="1">
    <source>
        <dbReference type="HAMAP-Rule" id="MF_00225"/>
    </source>
</evidence>
<protein>
    <recommendedName>
        <fullName evidence="1">Dihydroorotate dehydrogenase (quinone)</fullName>
        <ecNumber evidence="1">1.3.5.2</ecNumber>
    </recommendedName>
    <alternativeName>
        <fullName evidence="1">DHOdehase</fullName>
        <shortName evidence="1">DHOD</shortName>
        <shortName evidence="1">DHODase</shortName>
    </alternativeName>
    <alternativeName>
        <fullName evidence="1">Dihydroorotate oxidase</fullName>
    </alternativeName>
</protein>
<dbReference type="EC" id="1.3.5.2" evidence="1"/>
<dbReference type="EMBL" id="CP001191">
    <property type="protein sequence ID" value="ACI53493.1"/>
    <property type="molecule type" value="Genomic_DNA"/>
</dbReference>
<dbReference type="RefSeq" id="WP_012556516.1">
    <property type="nucleotide sequence ID" value="NC_011369.1"/>
</dbReference>
<dbReference type="SMR" id="B5ZPH6"/>
<dbReference type="STRING" id="395492.Rleg2_0193"/>
<dbReference type="KEGG" id="rlt:Rleg2_0193"/>
<dbReference type="eggNOG" id="COG0167">
    <property type="taxonomic scope" value="Bacteria"/>
</dbReference>
<dbReference type="HOGENOM" id="CLU_013640_2_1_5"/>
<dbReference type="UniPathway" id="UPA00070">
    <property type="reaction ID" value="UER00946"/>
</dbReference>
<dbReference type="Proteomes" id="UP000008330">
    <property type="component" value="Chromosome"/>
</dbReference>
<dbReference type="GO" id="GO:0005737">
    <property type="term" value="C:cytoplasm"/>
    <property type="evidence" value="ECO:0007669"/>
    <property type="project" value="InterPro"/>
</dbReference>
<dbReference type="GO" id="GO:0005886">
    <property type="term" value="C:plasma membrane"/>
    <property type="evidence" value="ECO:0007669"/>
    <property type="project" value="UniProtKB-SubCell"/>
</dbReference>
<dbReference type="GO" id="GO:0106430">
    <property type="term" value="F:dihydroorotate dehydrogenase (quinone) activity"/>
    <property type="evidence" value="ECO:0007669"/>
    <property type="project" value="UniProtKB-EC"/>
</dbReference>
<dbReference type="GO" id="GO:0006207">
    <property type="term" value="P:'de novo' pyrimidine nucleobase biosynthetic process"/>
    <property type="evidence" value="ECO:0007669"/>
    <property type="project" value="InterPro"/>
</dbReference>
<dbReference type="GO" id="GO:0044205">
    <property type="term" value="P:'de novo' UMP biosynthetic process"/>
    <property type="evidence" value="ECO:0007669"/>
    <property type="project" value="UniProtKB-UniRule"/>
</dbReference>
<dbReference type="CDD" id="cd04738">
    <property type="entry name" value="DHOD_2_like"/>
    <property type="match status" value="1"/>
</dbReference>
<dbReference type="Gene3D" id="3.20.20.70">
    <property type="entry name" value="Aldolase class I"/>
    <property type="match status" value="1"/>
</dbReference>
<dbReference type="HAMAP" id="MF_00225">
    <property type="entry name" value="DHO_dh_type2"/>
    <property type="match status" value="1"/>
</dbReference>
<dbReference type="InterPro" id="IPR013785">
    <property type="entry name" value="Aldolase_TIM"/>
</dbReference>
<dbReference type="InterPro" id="IPR050074">
    <property type="entry name" value="DHO_dehydrogenase"/>
</dbReference>
<dbReference type="InterPro" id="IPR005719">
    <property type="entry name" value="Dihydroorotate_DH_2"/>
</dbReference>
<dbReference type="InterPro" id="IPR005720">
    <property type="entry name" value="Dihydroorotate_DH_cat"/>
</dbReference>
<dbReference type="InterPro" id="IPR001295">
    <property type="entry name" value="Dihydroorotate_DH_CS"/>
</dbReference>
<dbReference type="NCBIfam" id="NF003645">
    <property type="entry name" value="PRK05286.1-2"/>
    <property type="match status" value="1"/>
</dbReference>
<dbReference type="NCBIfam" id="NF003652">
    <property type="entry name" value="PRK05286.2-5"/>
    <property type="match status" value="1"/>
</dbReference>
<dbReference type="NCBIfam" id="TIGR01036">
    <property type="entry name" value="pyrD_sub2"/>
    <property type="match status" value="1"/>
</dbReference>
<dbReference type="PANTHER" id="PTHR48109:SF4">
    <property type="entry name" value="DIHYDROOROTATE DEHYDROGENASE (QUINONE), MITOCHONDRIAL"/>
    <property type="match status" value="1"/>
</dbReference>
<dbReference type="PANTHER" id="PTHR48109">
    <property type="entry name" value="DIHYDROOROTATE DEHYDROGENASE (QUINONE), MITOCHONDRIAL-RELATED"/>
    <property type="match status" value="1"/>
</dbReference>
<dbReference type="Pfam" id="PF01180">
    <property type="entry name" value="DHO_dh"/>
    <property type="match status" value="1"/>
</dbReference>
<dbReference type="SUPFAM" id="SSF51395">
    <property type="entry name" value="FMN-linked oxidoreductases"/>
    <property type="match status" value="1"/>
</dbReference>
<dbReference type="PROSITE" id="PS00911">
    <property type="entry name" value="DHODEHASE_1"/>
    <property type="match status" value="1"/>
</dbReference>
<dbReference type="PROSITE" id="PS00912">
    <property type="entry name" value="DHODEHASE_2"/>
    <property type="match status" value="1"/>
</dbReference>